<accession>P0CAI1</accession>
<proteinExistence type="inferred from homology"/>
<organism>
    <name type="scientific">African swine fever virus (isolate Tick/South Africa/Pretoriuskop Pr4/1996)</name>
    <name type="common">ASFV</name>
    <dbReference type="NCBI Taxonomy" id="561443"/>
    <lineage>
        <taxon>Viruses</taxon>
        <taxon>Varidnaviria</taxon>
        <taxon>Bamfordvirae</taxon>
        <taxon>Nucleocytoviricota</taxon>
        <taxon>Pokkesviricetes</taxon>
        <taxon>Asfuvirales</taxon>
        <taxon>Asfarviridae</taxon>
        <taxon>Asfivirus</taxon>
        <taxon>African swine fever virus</taxon>
    </lineage>
</organism>
<dbReference type="EMBL" id="AY261363">
    <property type="status" value="NOT_ANNOTATED_CDS"/>
    <property type="molecule type" value="Genomic_DNA"/>
</dbReference>
<dbReference type="Proteomes" id="UP000000859">
    <property type="component" value="Segment"/>
</dbReference>
<dbReference type="GO" id="GO:0030430">
    <property type="term" value="C:host cell cytoplasm"/>
    <property type="evidence" value="ECO:0007669"/>
    <property type="project" value="UniProtKB-SubCell"/>
</dbReference>
<dbReference type="CDD" id="cd19941">
    <property type="entry name" value="TIL"/>
    <property type="match status" value="1"/>
</dbReference>
<comment type="function">
    <text evidence="1">Plays an essential role in the assembly of the icosahedral capsid of the virus (By similarity). Allows the assembly of 3 molecules of hexon protein p72 and formation of a thermostable trimer (By similarity).</text>
</comment>
<comment type="subcellular location">
    <subcellularLocation>
        <location evidence="1">Host cytoplasm</location>
    </subcellularLocation>
</comment>
<comment type="induction">
    <text evidence="2">Expressed in the late phase of the viral replicative cycle.</text>
</comment>
<comment type="similarity">
    <text evidence="2">Belongs to the asfivirus B602L family.</text>
</comment>
<reference key="1">
    <citation type="submission" date="2003-03" db="EMBL/GenBank/DDBJ databases">
        <title>African swine fever virus genomes.</title>
        <authorList>
            <person name="Kutish G.F."/>
            <person name="Rock D.L."/>
        </authorList>
    </citation>
    <scope>NUCLEOTIDE SEQUENCE [LARGE SCALE GENOMIC DNA]</scope>
</reference>
<protein>
    <recommendedName>
        <fullName>Protein B602L</fullName>
        <shortName>pB602L</shortName>
    </recommendedName>
</protein>
<feature type="chain" id="PRO_0000373703" description="Protein B602L">
    <location>
        <begin position="1"/>
        <end position="570"/>
    </location>
</feature>
<feature type="repeat" description="1">
    <location>
        <begin position="161"/>
        <end position="164"/>
    </location>
</feature>
<feature type="repeat" description="2">
    <location>
        <begin position="165"/>
        <end position="168"/>
    </location>
</feature>
<feature type="repeat" description="3">
    <location>
        <begin position="169"/>
        <end position="172"/>
    </location>
</feature>
<feature type="repeat" description="4">
    <location>
        <begin position="173"/>
        <end position="176"/>
    </location>
</feature>
<feature type="repeat" description="5">
    <location>
        <begin position="177"/>
        <end position="180"/>
    </location>
</feature>
<feature type="repeat" description="6">
    <location>
        <begin position="181"/>
        <end position="184"/>
    </location>
</feature>
<feature type="repeat" description="7">
    <location>
        <begin position="185"/>
        <end position="188"/>
    </location>
</feature>
<feature type="repeat" description="8">
    <location>
        <begin position="189"/>
        <end position="192"/>
    </location>
</feature>
<feature type="repeat" description="9">
    <location>
        <begin position="193"/>
        <end position="196"/>
    </location>
</feature>
<feature type="repeat" description="10">
    <location>
        <begin position="197"/>
        <end position="200"/>
    </location>
</feature>
<feature type="repeat" description="11">
    <location>
        <begin position="201"/>
        <end position="204"/>
    </location>
</feature>
<feature type="repeat" description="12">
    <location>
        <begin position="205"/>
        <end position="208"/>
    </location>
</feature>
<feature type="repeat" description="13">
    <location>
        <begin position="209"/>
        <end position="212"/>
    </location>
</feature>
<feature type="repeat" description="14">
    <location>
        <begin position="213"/>
        <end position="216"/>
    </location>
</feature>
<feature type="repeat" description="15">
    <location>
        <begin position="217"/>
        <end position="220"/>
    </location>
</feature>
<feature type="repeat" description="16">
    <location>
        <begin position="221"/>
        <end position="224"/>
    </location>
</feature>
<feature type="repeat" description="17">
    <location>
        <begin position="225"/>
        <end position="228"/>
    </location>
</feature>
<feature type="repeat" description="18">
    <location>
        <begin position="229"/>
        <end position="232"/>
    </location>
</feature>
<feature type="repeat" description="19">
    <location>
        <begin position="233"/>
        <end position="236"/>
    </location>
</feature>
<feature type="repeat" description="20">
    <location>
        <begin position="237"/>
        <end position="240"/>
    </location>
</feature>
<feature type="region of interest" description="20 X 4 AA tandem repeats of [CNS]-[ATV]-[DNS]-T">
    <location>
        <begin position="161"/>
        <end position="240"/>
    </location>
</feature>
<keyword id="KW-1035">Host cytoplasm</keyword>
<keyword id="KW-0426">Late protein</keyword>
<keyword id="KW-0677">Repeat</keyword>
<sequence length="570" mass="64965">MAEFNIDELLKNVLENPSTEISEETLKQLYQRTNPYKQFKNDSRVAFCSFTNLREQYIRRLIMTSFIGYVFKALQEWMPSYSKPTHTTKTLLSELITLVDTLKQETNDVPSESVVNTILSIADSCKTQTQKSKEAKTTIDSFLREHFVFDPNLHAQSAYTCADTNASTSADTNASTCADTNVDTCASTCADTNVDTCADTCASTCASTCASTCASTCADTNVDTCADTCVSTCASTCANTEYADLADPERIPLHIMQKTLNVPNELQADIDAITQTPQGYRAAAHILQNIELHQSIKHMLENPRAFKPILFNTKITRYLSQHIPPQDTFYKWNYYIEDNYEELRAATESIYPEKPDLEFAFIIYDVVDSSNQQKVDEFYYKYKDQIFSEVSSIQLGNWTLLGSFKANRERYNYFNQNNEIIKRILDRHEEDLKIGKEILRNTIYHKKAKNIQETGPDAPGLSIYNSTFHTDSGIKGLLSFKELKNLEKASGNIKKAREYDFIDDCEEKIKQLLSKENLTPDEESELIKTKKQLNNALEMLNVPDDTIRVDMWVNNNNKLEKEILYTKAEL</sequence>
<organismHost>
    <name type="scientific">Ornithodoros</name>
    <name type="common">relapsing fever ticks</name>
    <dbReference type="NCBI Taxonomy" id="6937"/>
</organismHost>
<organismHost>
    <name type="scientific">Phacochoerus aethiopicus</name>
    <name type="common">Warthog</name>
    <dbReference type="NCBI Taxonomy" id="85517"/>
</organismHost>
<organismHost>
    <name type="scientific">Phacochoerus africanus</name>
    <name type="common">Warthog</name>
    <dbReference type="NCBI Taxonomy" id="41426"/>
</organismHost>
<organismHost>
    <name type="scientific">Potamochoerus larvatus</name>
    <name type="common">Bushpig</name>
    <dbReference type="NCBI Taxonomy" id="273792"/>
</organismHost>
<organismHost>
    <name type="scientific">Sus scrofa</name>
    <name type="common">Pig</name>
    <dbReference type="NCBI Taxonomy" id="9823"/>
</organismHost>
<gene>
    <name type="ordered locus">Pret-091</name>
</gene>
<evidence type="ECO:0000250" key="1">
    <source>
        <dbReference type="UniProtKB" id="Q65169"/>
    </source>
</evidence>
<evidence type="ECO:0000305" key="2"/>
<name>VF602_ASFP4</name>